<sequence length="510" mass="57541">MNKELVLVVDFGGQYNQLIARRVRENRVYCEIVPYTTSIEDIKEKAPKGIIFTGGPNSVYGENAPRVRKELFDLGIPVLGICYGDQLMAHSLEGEVTSPEKREYGKTDVNLDNSSLLFKDMKEKDQCWMSHTDYISKVPKGFKIIATTDECPCAAMENAEKKLYGVQFHPEVEHTLFGKKMLKNFLFNVCNLKGDWSMSSFAEQQIKAIKEKVGDKKVICALSGGVDSSVAAVIVHKAIGKQLTCIFVDHGLLRKDEGDQVEKIFKDQFEMNLIRVNAQDRFLGKLKGVSDPERKRKIIGEEFIRVFEEEAKKLGDISFLVQGTIYPDIVESGTNTSATIKSHHNVGGLPEDMEFKLIEPLRELFKDEVRAVGEELGIPHKLVWRQPFPGPGLAIRVLGEVTEEKLAITREADAIFREEIAKAGLEEKIWQYFACLPNIQSVGVMGDERTYCHTIALRAVTSSDAMTSDWARIPYEVLDKVSRRIVNEVKEVNRIVYDVTSKPPATIEWE</sequence>
<dbReference type="EC" id="6.3.5.2" evidence="1"/>
<dbReference type="EMBL" id="CP000962">
    <property type="protein sequence ID" value="ACA56819.1"/>
    <property type="molecule type" value="Genomic_DNA"/>
</dbReference>
<dbReference type="RefSeq" id="WP_012344635.1">
    <property type="nucleotide sequence ID" value="NC_010520.1"/>
</dbReference>
<dbReference type="SMR" id="B1L1J7"/>
<dbReference type="MEROPS" id="C26.957"/>
<dbReference type="KEGG" id="cbl:CLK_2711"/>
<dbReference type="HOGENOM" id="CLU_014340_0_5_9"/>
<dbReference type="UniPathway" id="UPA00189">
    <property type="reaction ID" value="UER00296"/>
</dbReference>
<dbReference type="GO" id="GO:0005829">
    <property type="term" value="C:cytosol"/>
    <property type="evidence" value="ECO:0007669"/>
    <property type="project" value="TreeGrafter"/>
</dbReference>
<dbReference type="GO" id="GO:0005524">
    <property type="term" value="F:ATP binding"/>
    <property type="evidence" value="ECO:0007669"/>
    <property type="project" value="UniProtKB-UniRule"/>
</dbReference>
<dbReference type="GO" id="GO:0003921">
    <property type="term" value="F:GMP synthase activity"/>
    <property type="evidence" value="ECO:0007669"/>
    <property type="project" value="InterPro"/>
</dbReference>
<dbReference type="CDD" id="cd01742">
    <property type="entry name" value="GATase1_GMP_Synthase"/>
    <property type="match status" value="1"/>
</dbReference>
<dbReference type="CDD" id="cd01997">
    <property type="entry name" value="GMP_synthase_C"/>
    <property type="match status" value="1"/>
</dbReference>
<dbReference type="FunFam" id="3.30.300.10:FF:000002">
    <property type="entry name" value="GMP synthase [glutamine-hydrolyzing]"/>
    <property type="match status" value="1"/>
</dbReference>
<dbReference type="FunFam" id="3.40.50.620:FF:000001">
    <property type="entry name" value="GMP synthase [glutamine-hydrolyzing]"/>
    <property type="match status" value="1"/>
</dbReference>
<dbReference type="FunFam" id="3.40.50.880:FF:000001">
    <property type="entry name" value="GMP synthase [glutamine-hydrolyzing]"/>
    <property type="match status" value="1"/>
</dbReference>
<dbReference type="Gene3D" id="3.30.300.10">
    <property type="match status" value="1"/>
</dbReference>
<dbReference type="Gene3D" id="3.40.50.880">
    <property type="match status" value="1"/>
</dbReference>
<dbReference type="Gene3D" id="3.40.50.620">
    <property type="entry name" value="HUPs"/>
    <property type="match status" value="1"/>
</dbReference>
<dbReference type="HAMAP" id="MF_00344">
    <property type="entry name" value="GMP_synthase"/>
    <property type="match status" value="1"/>
</dbReference>
<dbReference type="InterPro" id="IPR029062">
    <property type="entry name" value="Class_I_gatase-like"/>
</dbReference>
<dbReference type="InterPro" id="IPR017926">
    <property type="entry name" value="GATASE"/>
</dbReference>
<dbReference type="InterPro" id="IPR001674">
    <property type="entry name" value="GMP_synth_C"/>
</dbReference>
<dbReference type="InterPro" id="IPR004739">
    <property type="entry name" value="GMP_synth_GATase"/>
</dbReference>
<dbReference type="InterPro" id="IPR022955">
    <property type="entry name" value="GMP_synthase"/>
</dbReference>
<dbReference type="InterPro" id="IPR025777">
    <property type="entry name" value="GMPS_ATP_PPase_dom"/>
</dbReference>
<dbReference type="InterPro" id="IPR022310">
    <property type="entry name" value="NAD/GMP_synthase"/>
</dbReference>
<dbReference type="InterPro" id="IPR014729">
    <property type="entry name" value="Rossmann-like_a/b/a_fold"/>
</dbReference>
<dbReference type="NCBIfam" id="TIGR00884">
    <property type="entry name" value="guaA_Cterm"/>
    <property type="match status" value="1"/>
</dbReference>
<dbReference type="NCBIfam" id="TIGR00888">
    <property type="entry name" value="guaA_Nterm"/>
    <property type="match status" value="1"/>
</dbReference>
<dbReference type="NCBIfam" id="NF000848">
    <property type="entry name" value="PRK00074.1"/>
    <property type="match status" value="1"/>
</dbReference>
<dbReference type="PANTHER" id="PTHR11922:SF2">
    <property type="entry name" value="GMP SYNTHASE [GLUTAMINE-HYDROLYZING]"/>
    <property type="match status" value="1"/>
</dbReference>
<dbReference type="PANTHER" id="PTHR11922">
    <property type="entry name" value="GMP SYNTHASE-RELATED"/>
    <property type="match status" value="1"/>
</dbReference>
<dbReference type="Pfam" id="PF00117">
    <property type="entry name" value="GATase"/>
    <property type="match status" value="1"/>
</dbReference>
<dbReference type="Pfam" id="PF00958">
    <property type="entry name" value="GMP_synt_C"/>
    <property type="match status" value="1"/>
</dbReference>
<dbReference type="Pfam" id="PF02540">
    <property type="entry name" value="NAD_synthase"/>
    <property type="match status" value="1"/>
</dbReference>
<dbReference type="PRINTS" id="PR00099">
    <property type="entry name" value="CPSGATASE"/>
</dbReference>
<dbReference type="PRINTS" id="PR00096">
    <property type="entry name" value="GATASE"/>
</dbReference>
<dbReference type="SUPFAM" id="SSF52402">
    <property type="entry name" value="Adenine nucleotide alpha hydrolases-like"/>
    <property type="match status" value="1"/>
</dbReference>
<dbReference type="SUPFAM" id="SSF52317">
    <property type="entry name" value="Class I glutamine amidotransferase-like"/>
    <property type="match status" value="1"/>
</dbReference>
<dbReference type="PROSITE" id="PS51273">
    <property type="entry name" value="GATASE_TYPE_1"/>
    <property type="match status" value="1"/>
</dbReference>
<dbReference type="PROSITE" id="PS51553">
    <property type="entry name" value="GMPS_ATP_PPASE"/>
    <property type="match status" value="1"/>
</dbReference>
<accession>B1L1J7</accession>
<comment type="function">
    <text evidence="1">Catalyzes the synthesis of GMP from XMP.</text>
</comment>
<comment type="catalytic activity">
    <reaction evidence="1">
        <text>XMP + L-glutamine + ATP + H2O = GMP + L-glutamate + AMP + diphosphate + 2 H(+)</text>
        <dbReference type="Rhea" id="RHEA:11680"/>
        <dbReference type="ChEBI" id="CHEBI:15377"/>
        <dbReference type="ChEBI" id="CHEBI:15378"/>
        <dbReference type="ChEBI" id="CHEBI:29985"/>
        <dbReference type="ChEBI" id="CHEBI:30616"/>
        <dbReference type="ChEBI" id="CHEBI:33019"/>
        <dbReference type="ChEBI" id="CHEBI:57464"/>
        <dbReference type="ChEBI" id="CHEBI:58115"/>
        <dbReference type="ChEBI" id="CHEBI:58359"/>
        <dbReference type="ChEBI" id="CHEBI:456215"/>
        <dbReference type="EC" id="6.3.5.2"/>
    </reaction>
</comment>
<comment type="pathway">
    <text evidence="1">Purine metabolism; GMP biosynthesis; GMP from XMP (L-Gln route): step 1/1.</text>
</comment>
<comment type="subunit">
    <text evidence="1">Homodimer.</text>
</comment>
<feature type="chain" id="PRO_1000120261" description="GMP synthase [glutamine-hydrolyzing]">
    <location>
        <begin position="1"/>
        <end position="510"/>
    </location>
</feature>
<feature type="domain" description="Glutamine amidotransferase type-1" evidence="1">
    <location>
        <begin position="5"/>
        <end position="195"/>
    </location>
</feature>
<feature type="domain" description="GMPS ATP-PPase" evidence="1">
    <location>
        <begin position="196"/>
        <end position="385"/>
    </location>
</feature>
<feature type="active site" description="Nucleophile" evidence="1">
    <location>
        <position position="82"/>
    </location>
</feature>
<feature type="active site" evidence="1">
    <location>
        <position position="169"/>
    </location>
</feature>
<feature type="active site" evidence="1">
    <location>
        <position position="171"/>
    </location>
</feature>
<feature type="binding site" evidence="1">
    <location>
        <begin position="223"/>
        <end position="229"/>
    </location>
    <ligand>
        <name>ATP</name>
        <dbReference type="ChEBI" id="CHEBI:30616"/>
    </ligand>
</feature>
<gene>
    <name evidence="1" type="primary">guaA</name>
    <name type="ordered locus">CLK_2711</name>
</gene>
<keyword id="KW-0067">ATP-binding</keyword>
<keyword id="KW-0315">Glutamine amidotransferase</keyword>
<keyword id="KW-0332">GMP biosynthesis</keyword>
<keyword id="KW-0436">Ligase</keyword>
<keyword id="KW-0547">Nucleotide-binding</keyword>
<keyword id="KW-0658">Purine biosynthesis</keyword>
<proteinExistence type="inferred from homology"/>
<name>GUAA_CLOBM</name>
<evidence type="ECO:0000255" key="1">
    <source>
        <dbReference type="HAMAP-Rule" id="MF_00344"/>
    </source>
</evidence>
<reference key="1">
    <citation type="journal article" date="2007" name="PLoS ONE">
        <title>Analysis of the neurotoxin complex genes in Clostridium botulinum A1-A4 and B1 strains: BoNT/A3, /Ba4 and /B1 clusters are located within plasmids.</title>
        <authorList>
            <person name="Smith T.J."/>
            <person name="Hill K.K."/>
            <person name="Foley B.T."/>
            <person name="Detter J.C."/>
            <person name="Munk A.C."/>
            <person name="Bruce D.C."/>
            <person name="Doggett N.A."/>
            <person name="Smith L.A."/>
            <person name="Marks J.D."/>
            <person name="Xie G."/>
            <person name="Brettin T.S."/>
        </authorList>
    </citation>
    <scope>NUCLEOTIDE SEQUENCE [LARGE SCALE GENOMIC DNA]</scope>
    <source>
        <strain>Loch Maree / Type A3</strain>
    </source>
</reference>
<protein>
    <recommendedName>
        <fullName evidence="1">GMP synthase [glutamine-hydrolyzing]</fullName>
        <ecNumber evidence="1">6.3.5.2</ecNumber>
    </recommendedName>
    <alternativeName>
        <fullName evidence="1">GMP synthetase</fullName>
    </alternativeName>
    <alternativeName>
        <fullName evidence="1">Glutamine amidotransferase</fullName>
    </alternativeName>
</protein>
<organism>
    <name type="scientific">Clostridium botulinum (strain Loch Maree / Type A3)</name>
    <dbReference type="NCBI Taxonomy" id="498214"/>
    <lineage>
        <taxon>Bacteria</taxon>
        <taxon>Bacillati</taxon>
        <taxon>Bacillota</taxon>
        <taxon>Clostridia</taxon>
        <taxon>Eubacteriales</taxon>
        <taxon>Clostridiaceae</taxon>
        <taxon>Clostridium</taxon>
    </lineage>
</organism>